<sequence>MKTLYSLRRFYPVETLFNGTLALAGRDQETTGFAWWAGNARLINLSGKLLGAHVAHAGLIVFWAGAMNLFEVAHFVPEKPMYEQGLILLPHLATLGWGVGPGGEVIDTFPYFVSGVLHLISSAVLGFGGIYHALLGPETLEESFPFFGYVWKDRNKMTTILGIHLILLGIGAFLLVFKALYFGGVYDTWAPGGGDVRKITNLTLSPSVIFGYLLKSPFGGEGWIVSVDDLEDIVGGHVWLGSICILGGIWHILTKPFAWARRALVWSGEAYLSYSLGALSVFGFIACCFVWFNNTAYPSEFYGPTGPEASQAQAFTFLVRDQRLGANIGSAQGPTGLGKYLMRSPTGEVIFGGETMRFWDLRAPWLEPLRGPNGLDLSRLKKDIQPWQERRSAEYMTHAPLGSLNSVGGVATEINAVNYVSPRSWLATSHFVLGFFLFVGHLWHAGRARAAAAGFEKGIDRDFEPVLFMTPLN</sequence>
<accession>Q2QD93</accession>
<accession>Q4VZN7</accession>
<comment type="function">
    <text evidence="1">One of the components of the core complex of photosystem II (PSII). It binds chlorophyll and helps catalyze the primary light-induced photochemical processes of PSII. PSII is a light-driven water:plastoquinone oxidoreductase, using light energy to abstract electrons from H(2)O, generating O(2) and a proton gradient subsequently used for ATP formation.</text>
</comment>
<comment type="cofactor">
    <text evidence="1">Binds multiple chlorophylls and provides some of the ligands for the Ca-4Mn-5O cluster of the oxygen-evolving complex. It may also provide a ligand for a Cl- that is required for oxygen evolution. PSII binds additional chlorophylls, carotenoids and specific lipids.</text>
</comment>
<comment type="subunit">
    <text evidence="1">PSII is composed of 1 copy each of membrane proteins PsbA, PsbB, PsbC, PsbD, PsbE, PsbF, PsbH, PsbI, PsbJ, PsbK, PsbL, PsbM, PsbT, PsbX, PsbY, PsbZ, Psb30/Ycf12, at least 3 peripheral proteins of the oxygen-evolving complex and a large number of cofactors. It forms dimeric complexes.</text>
</comment>
<comment type="subcellular location">
    <subcellularLocation>
        <location evidence="1">Plastid</location>
        <location evidence="1">Chloroplast thylakoid membrane</location>
        <topology evidence="1">Multi-pass membrane protein</topology>
    </subcellularLocation>
</comment>
<comment type="similarity">
    <text evidence="1">Belongs to the PsbB/PsbC family. PsbC subfamily.</text>
</comment>
<comment type="sequence caution" evidence="2">
    <conflict type="erroneous initiation">
        <sequence resource="EMBL-CDS" id="CAJ00754"/>
    </conflict>
    <text>Truncated N-terminus.</text>
</comment>
<protein>
    <recommendedName>
        <fullName evidence="1">Photosystem II CP43 reaction center protein</fullName>
    </recommendedName>
    <alternativeName>
        <fullName evidence="1">PSII 43 kDa protein</fullName>
    </alternativeName>
    <alternativeName>
        <fullName evidence="1">Protein CP-43</fullName>
    </alternativeName>
</protein>
<reference key="1">
    <citation type="journal article" date="2006" name="Plant Cell Rep.">
        <title>Complete sequence and organization of the cucumber (Cucumis sativus L. cv. Baekmibaekdadagi) chloroplast genome.</title>
        <authorList>
            <person name="Kim J.-S."/>
            <person name="Jung J.D."/>
            <person name="Lee J.-A."/>
            <person name="Park H.-W."/>
            <person name="Oh K.-H."/>
            <person name="Jeong W.J."/>
            <person name="Choi D.-W."/>
            <person name="Liu J.R."/>
            <person name="Cho K.Y."/>
        </authorList>
    </citation>
    <scope>NUCLEOTIDE SEQUENCE [LARGE SCALE GENOMIC DNA]</scope>
    <source>
        <strain>cv. Baekmibaekdadagi</strain>
    </source>
</reference>
<reference key="2">
    <citation type="journal article" date="2007" name="Cell. Mol. Biol. Lett.">
        <title>The complete structure of the cucumber (Cucumis sativus L.) chloroplast genome: its composition and comparative analysis.</title>
        <authorList>
            <person name="Plader W.W."/>
            <person name="Yukawa Y."/>
            <person name="Sugiura M."/>
            <person name="Malepszy S."/>
        </authorList>
    </citation>
    <scope>NUCLEOTIDE SEQUENCE [LARGE SCALE GENOMIC DNA]</scope>
    <source>
        <strain>cv. Borszczagowski</strain>
    </source>
</reference>
<reference key="3">
    <citation type="journal article" date="2007" name="Genome">
        <title>Sequencing cucumber (Cucumis sativus L.) chloroplast genomes identifies differences between chilling-tolerant and -susceptible cucumber lines.</title>
        <authorList>
            <person name="Chung S.-M."/>
            <person name="Gordon V.S."/>
            <person name="Staub J.E."/>
        </authorList>
    </citation>
    <scope>NUCLEOTIDE SEQUENCE [LARGE SCALE GENOMIC DNA]</scope>
    <source>
        <strain>cv. Chipper</strain>
        <strain>cv. Gy14</strain>
    </source>
</reference>
<evidence type="ECO:0000255" key="1">
    <source>
        <dbReference type="HAMAP-Rule" id="MF_01496"/>
    </source>
</evidence>
<evidence type="ECO:0000305" key="2"/>
<name>PSBC_CUCSA</name>
<keyword id="KW-0007">Acetylation</keyword>
<keyword id="KW-0148">Chlorophyll</keyword>
<keyword id="KW-0150">Chloroplast</keyword>
<keyword id="KW-0157">Chromophore</keyword>
<keyword id="KW-0464">Manganese</keyword>
<keyword id="KW-0472">Membrane</keyword>
<keyword id="KW-0479">Metal-binding</keyword>
<keyword id="KW-0597">Phosphoprotein</keyword>
<keyword id="KW-0602">Photosynthesis</keyword>
<keyword id="KW-0604">Photosystem II</keyword>
<keyword id="KW-0934">Plastid</keyword>
<keyword id="KW-0793">Thylakoid</keyword>
<keyword id="KW-0812">Transmembrane</keyword>
<keyword id="KW-1133">Transmembrane helix</keyword>
<geneLocation type="chloroplast"/>
<dbReference type="EMBL" id="DQ119058">
    <property type="protein sequence ID" value="AAZ94647.1"/>
    <property type="molecule type" value="Genomic_DNA"/>
</dbReference>
<dbReference type="EMBL" id="AJ970307">
    <property type="protein sequence ID" value="CAJ00754.1"/>
    <property type="status" value="ALT_INIT"/>
    <property type="molecule type" value="Genomic_DNA"/>
</dbReference>
<dbReference type="EMBL" id="DQ865975">
    <property type="protein sequence ID" value="ABI97413.1"/>
    <property type="molecule type" value="Genomic_DNA"/>
</dbReference>
<dbReference type="EMBL" id="DQ865976">
    <property type="protein sequence ID" value="ABI98742.1"/>
    <property type="molecule type" value="Genomic_DNA"/>
</dbReference>
<dbReference type="RefSeq" id="YP_247595.1">
    <property type="nucleotide sequence ID" value="NC_007144.1"/>
</dbReference>
<dbReference type="SMR" id="Q2QD93"/>
<dbReference type="GeneID" id="3429277"/>
<dbReference type="KEGG" id="csv:3429277"/>
<dbReference type="OrthoDB" id="1926060at2759"/>
<dbReference type="GO" id="GO:0009535">
    <property type="term" value="C:chloroplast thylakoid membrane"/>
    <property type="evidence" value="ECO:0007669"/>
    <property type="project" value="UniProtKB-SubCell"/>
</dbReference>
<dbReference type="GO" id="GO:0009523">
    <property type="term" value="C:photosystem II"/>
    <property type="evidence" value="ECO:0007669"/>
    <property type="project" value="UniProtKB-KW"/>
</dbReference>
<dbReference type="GO" id="GO:0016168">
    <property type="term" value="F:chlorophyll binding"/>
    <property type="evidence" value="ECO:0007669"/>
    <property type="project" value="UniProtKB-UniRule"/>
</dbReference>
<dbReference type="GO" id="GO:0045156">
    <property type="term" value="F:electron transporter, transferring electrons within the cyclic electron transport pathway of photosynthesis activity"/>
    <property type="evidence" value="ECO:0007669"/>
    <property type="project" value="InterPro"/>
</dbReference>
<dbReference type="GO" id="GO:0046872">
    <property type="term" value="F:metal ion binding"/>
    <property type="evidence" value="ECO:0007669"/>
    <property type="project" value="UniProtKB-KW"/>
</dbReference>
<dbReference type="GO" id="GO:0009772">
    <property type="term" value="P:photosynthetic electron transport in photosystem II"/>
    <property type="evidence" value="ECO:0007669"/>
    <property type="project" value="InterPro"/>
</dbReference>
<dbReference type="FunFam" id="1.10.10.670:FF:000001">
    <property type="entry name" value="Photosystem II CP43 reaction center protein"/>
    <property type="match status" value="1"/>
</dbReference>
<dbReference type="Gene3D" id="1.10.10.670">
    <property type="entry name" value="photosystem ii from thermosynechococcus elongatus"/>
    <property type="match status" value="1"/>
</dbReference>
<dbReference type="HAMAP" id="MF_01496">
    <property type="entry name" value="PSII_PsbC_CP43"/>
    <property type="match status" value="1"/>
</dbReference>
<dbReference type="InterPro" id="IPR000932">
    <property type="entry name" value="PS_antenna-like"/>
</dbReference>
<dbReference type="InterPro" id="IPR036001">
    <property type="entry name" value="PS_II_antenna-like_sf"/>
</dbReference>
<dbReference type="InterPro" id="IPR005869">
    <property type="entry name" value="PSII_PsbC"/>
</dbReference>
<dbReference type="InterPro" id="IPR044900">
    <property type="entry name" value="PSII_PsbC_sf"/>
</dbReference>
<dbReference type="NCBIfam" id="TIGR01153">
    <property type="entry name" value="psbC"/>
    <property type="match status" value="1"/>
</dbReference>
<dbReference type="Pfam" id="PF00421">
    <property type="entry name" value="PSII"/>
    <property type="match status" value="1"/>
</dbReference>
<dbReference type="SUPFAM" id="SSF161077">
    <property type="entry name" value="Photosystem II antenna protein-like"/>
    <property type="match status" value="1"/>
</dbReference>
<organism>
    <name type="scientific">Cucumis sativus</name>
    <name type="common">Cucumber</name>
    <dbReference type="NCBI Taxonomy" id="3659"/>
    <lineage>
        <taxon>Eukaryota</taxon>
        <taxon>Viridiplantae</taxon>
        <taxon>Streptophyta</taxon>
        <taxon>Embryophyta</taxon>
        <taxon>Tracheophyta</taxon>
        <taxon>Spermatophyta</taxon>
        <taxon>Magnoliopsida</taxon>
        <taxon>eudicotyledons</taxon>
        <taxon>Gunneridae</taxon>
        <taxon>Pentapetalae</taxon>
        <taxon>rosids</taxon>
        <taxon>fabids</taxon>
        <taxon>Cucurbitales</taxon>
        <taxon>Cucurbitaceae</taxon>
        <taxon>Benincaseae</taxon>
        <taxon>Cucumis</taxon>
    </lineage>
</organism>
<gene>
    <name evidence="1" type="primary">psbC</name>
    <name type="ordered locus">CsCp027</name>
</gene>
<proteinExistence type="inferred from homology"/>
<feature type="propeptide" id="PRO_0000431133" evidence="1">
    <location>
        <begin position="1"/>
        <end position="14"/>
    </location>
</feature>
<feature type="chain" id="PRO_0000361360" description="Photosystem II CP43 reaction center protein" evidence="1">
    <location>
        <begin position="15"/>
        <end position="473"/>
    </location>
</feature>
<feature type="transmembrane region" description="Helical" evidence="1">
    <location>
        <begin position="69"/>
        <end position="93"/>
    </location>
</feature>
<feature type="transmembrane region" description="Helical" evidence="1">
    <location>
        <begin position="134"/>
        <end position="155"/>
    </location>
</feature>
<feature type="transmembrane region" description="Helical" evidence="1">
    <location>
        <begin position="178"/>
        <end position="200"/>
    </location>
</feature>
<feature type="transmembrane region" description="Helical" evidence="1">
    <location>
        <begin position="255"/>
        <end position="275"/>
    </location>
</feature>
<feature type="transmembrane region" description="Helical" evidence="1">
    <location>
        <begin position="291"/>
        <end position="312"/>
    </location>
</feature>
<feature type="transmembrane region" description="Helical" evidence="1">
    <location>
        <begin position="447"/>
        <end position="471"/>
    </location>
</feature>
<feature type="binding site" evidence="1">
    <location>
        <position position="367"/>
    </location>
    <ligand>
        <name>[CaMn4O5] cluster</name>
        <dbReference type="ChEBI" id="CHEBI:189552"/>
    </ligand>
</feature>
<feature type="modified residue" description="N-acetylthreonine" evidence="1">
    <location>
        <position position="15"/>
    </location>
</feature>
<feature type="modified residue" description="Phosphothreonine" evidence="1">
    <location>
        <position position="15"/>
    </location>
</feature>